<reference key="1">
    <citation type="journal article" date="2005" name="Proc. Natl. Acad. Sci. U.S.A.">
        <title>Genome analysis of multiple pathogenic isolates of Streptococcus agalactiae: implications for the microbial 'pan-genome'.</title>
        <authorList>
            <person name="Tettelin H."/>
            <person name="Masignani V."/>
            <person name="Cieslewicz M.J."/>
            <person name="Donati C."/>
            <person name="Medini D."/>
            <person name="Ward N.L."/>
            <person name="Angiuoli S.V."/>
            <person name="Crabtree J."/>
            <person name="Jones A.L."/>
            <person name="Durkin A.S."/>
            <person name="DeBoy R.T."/>
            <person name="Davidsen T.M."/>
            <person name="Mora M."/>
            <person name="Scarselli M."/>
            <person name="Margarit y Ros I."/>
            <person name="Peterson J.D."/>
            <person name="Hauser C.R."/>
            <person name="Sundaram J.P."/>
            <person name="Nelson W.C."/>
            <person name="Madupu R."/>
            <person name="Brinkac L.M."/>
            <person name="Dodson R.J."/>
            <person name="Rosovitz M.J."/>
            <person name="Sullivan S.A."/>
            <person name="Daugherty S.C."/>
            <person name="Haft D.H."/>
            <person name="Selengut J."/>
            <person name="Gwinn M.L."/>
            <person name="Zhou L."/>
            <person name="Zafar N."/>
            <person name="Khouri H."/>
            <person name="Radune D."/>
            <person name="Dimitrov G."/>
            <person name="Watkins K."/>
            <person name="O'Connor K.J."/>
            <person name="Smith S."/>
            <person name="Utterback T.R."/>
            <person name="White O."/>
            <person name="Rubens C.E."/>
            <person name="Grandi G."/>
            <person name="Madoff L.C."/>
            <person name="Kasper D.L."/>
            <person name="Telford J.L."/>
            <person name="Wessels M.R."/>
            <person name="Rappuoli R."/>
            <person name="Fraser C.M."/>
        </authorList>
    </citation>
    <scope>NUCLEOTIDE SEQUENCE [LARGE SCALE GENOMIC DNA]</scope>
    <source>
        <strain>ATCC 27591 / A909 / CDC SS700</strain>
    </source>
</reference>
<comment type="catalytic activity">
    <reaction evidence="1">
        <text>tRNA(His) + L-histidine + ATP = L-histidyl-tRNA(His) + AMP + diphosphate + H(+)</text>
        <dbReference type="Rhea" id="RHEA:17313"/>
        <dbReference type="Rhea" id="RHEA-COMP:9665"/>
        <dbReference type="Rhea" id="RHEA-COMP:9689"/>
        <dbReference type="ChEBI" id="CHEBI:15378"/>
        <dbReference type="ChEBI" id="CHEBI:30616"/>
        <dbReference type="ChEBI" id="CHEBI:33019"/>
        <dbReference type="ChEBI" id="CHEBI:57595"/>
        <dbReference type="ChEBI" id="CHEBI:78442"/>
        <dbReference type="ChEBI" id="CHEBI:78527"/>
        <dbReference type="ChEBI" id="CHEBI:456215"/>
        <dbReference type="EC" id="6.1.1.21"/>
    </reaction>
</comment>
<comment type="subunit">
    <text evidence="1">Homodimer.</text>
</comment>
<comment type="subcellular location">
    <subcellularLocation>
        <location evidence="1">Cytoplasm</location>
    </subcellularLocation>
</comment>
<comment type="similarity">
    <text evidence="1">Belongs to the class-II aminoacyl-tRNA synthetase family.</text>
</comment>
<feature type="chain" id="PRO_1000016462" description="Histidine--tRNA ligase">
    <location>
        <begin position="1"/>
        <end position="426"/>
    </location>
</feature>
<organism>
    <name type="scientific">Streptococcus agalactiae serotype Ia (strain ATCC 27591 / A909 / CDC SS700)</name>
    <dbReference type="NCBI Taxonomy" id="205921"/>
    <lineage>
        <taxon>Bacteria</taxon>
        <taxon>Bacillati</taxon>
        <taxon>Bacillota</taxon>
        <taxon>Bacilli</taxon>
        <taxon>Lactobacillales</taxon>
        <taxon>Streptococcaceae</taxon>
        <taxon>Streptococcus</taxon>
    </lineage>
</organism>
<keyword id="KW-0030">Aminoacyl-tRNA synthetase</keyword>
<keyword id="KW-0067">ATP-binding</keyword>
<keyword id="KW-0963">Cytoplasm</keyword>
<keyword id="KW-0436">Ligase</keyword>
<keyword id="KW-0547">Nucleotide-binding</keyword>
<keyword id="KW-0648">Protein biosynthesis</keyword>
<accession>Q3JYL6</accession>
<protein>
    <recommendedName>
        <fullName evidence="1">Histidine--tRNA ligase</fullName>
        <ecNumber evidence="1">6.1.1.21</ecNumber>
    </recommendedName>
    <alternativeName>
        <fullName evidence="1">Histidyl-tRNA synthetase</fullName>
        <shortName evidence="1">HisRS</shortName>
    </alternativeName>
</protein>
<sequence length="426" mass="48422">MKLQKPKGTQDILPGESAKWQYVENVIRNLFKQYHYDEIRTPMFEHYEVISRSVGDTTDIVTKEMYDFHDKGDRHITLRPEGTAPVVRSYVENKLFAPEVQKPTKMYYIGSMFRYERPQAGRLREFHQVGVECFGSNNPATDVETIAMGHHLFEDLGIKNVKLHLNSLGSPESRQAYRQALIDYLTPIREQLSKDSQRRLNENPLRVLDSKEPEDKLAVENAPSILDYLDESSQAHFDAVCHMLDALNIPYIIDTNMVRGLDYYNHTIFEFITEIEDNELTICAGGRYDGLVSYFGGPETPAFGFGLGLERLLLILGKQGIPLPIENTIDLYIAVLGSEANLAALDLAQSIRHQGFKVERDYLGRKIKAQFKSADTFNAKVIMTLGSSEVDSREVSLKNNQTRQEVKVSFENIKTGFSSVLKQLGL</sequence>
<gene>
    <name evidence="1" type="primary">hisS</name>
    <name type="ordered locus">SAK_2047</name>
</gene>
<evidence type="ECO:0000255" key="1">
    <source>
        <dbReference type="HAMAP-Rule" id="MF_00127"/>
    </source>
</evidence>
<dbReference type="EC" id="6.1.1.21" evidence="1"/>
<dbReference type="EMBL" id="CP000114">
    <property type="protein sequence ID" value="ABA46049.1"/>
    <property type="molecule type" value="Genomic_DNA"/>
</dbReference>
<dbReference type="RefSeq" id="WP_000775906.1">
    <property type="nucleotide sequence ID" value="NC_007432.1"/>
</dbReference>
<dbReference type="SMR" id="Q3JYL6"/>
<dbReference type="KEGG" id="sak:SAK_2047"/>
<dbReference type="HOGENOM" id="CLU_025113_1_1_9"/>
<dbReference type="GO" id="GO:0005737">
    <property type="term" value="C:cytoplasm"/>
    <property type="evidence" value="ECO:0007669"/>
    <property type="project" value="UniProtKB-SubCell"/>
</dbReference>
<dbReference type="GO" id="GO:0005524">
    <property type="term" value="F:ATP binding"/>
    <property type="evidence" value="ECO:0007669"/>
    <property type="project" value="UniProtKB-UniRule"/>
</dbReference>
<dbReference type="GO" id="GO:0140096">
    <property type="term" value="F:catalytic activity, acting on a protein"/>
    <property type="evidence" value="ECO:0007669"/>
    <property type="project" value="UniProtKB-ARBA"/>
</dbReference>
<dbReference type="GO" id="GO:0004821">
    <property type="term" value="F:histidine-tRNA ligase activity"/>
    <property type="evidence" value="ECO:0007669"/>
    <property type="project" value="UniProtKB-UniRule"/>
</dbReference>
<dbReference type="GO" id="GO:0016740">
    <property type="term" value="F:transferase activity"/>
    <property type="evidence" value="ECO:0007669"/>
    <property type="project" value="UniProtKB-ARBA"/>
</dbReference>
<dbReference type="GO" id="GO:0006427">
    <property type="term" value="P:histidyl-tRNA aminoacylation"/>
    <property type="evidence" value="ECO:0007669"/>
    <property type="project" value="UniProtKB-UniRule"/>
</dbReference>
<dbReference type="CDD" id="cd00773">
    <property type="entry name" value="HisRS-like_core"/>
    <property type="match status" value="1"/>
</dbReference>
<dbReference type="CDD" id="cd00859">
    <property type="entry name" value="HisRS_anticodon"/>
    <property type="match status" value="1"/>
</dbReference>
<dbReference type="FunFam" id="3.30.930.10:FF:000005">
    <property type="entry name" value="Histidine--tRNA ligase"/>
    <property type="match status" value="1"/>
</dbReference>
<dbReference type="Gene3D" id="3.40.50.800">
    <property type="entry name" value="Anticodon-binding domain"/>
    <property type="match status" value="1"/>
</dbReference>
<dbReference type="Gene3D" id="3.30.930.10">
    <property type="entry name" value="Bira Bifunctional Protein, Domain 2"/>
    <property type="match status" value="1"/>
</dbReference>
<dbReference type="HAMAP" id="MF_00127">
    <property type="entry name" value="His_tRNA_synth"/>
    <property type="match status" value="1"/>
</dbReference>
<dbReference type="InterPro" id="IPR006195">
    <property type="entry name" value="aa-tRNA-synth_II"/>
</dbReference>
<dbReference type="InterPro" id="IPR045864">
    <property type="entry name" value="aa-tRNA-synth_II/BPL/LPL"/>
</dbReference>
<dbReference type="InterPro" id="IPR004154">
    <property type="entry name" value="Anticodon-bd"/>
</dbReference>
<dbReference type="InterPro" id="IPR036621">
    <property type="entry name" value="Anticodon-bd_dom_sf"/>
</dbReference>
<dbReference type="InterPro" id="IPR015807">
    <property type="entry name" value="His-tRNA-ligase"/>
</dbReference>
<dbReference type="InterPro" id="IPR041715">
    <property type="entry name" value="HisRS-like_core"/>
</dbReference>
<dbReference type="InterPro" id="IPR004516">
    <property type="entry name" value="HisRS/HisZ"/>
</dbReference>
<dbReference type="InterPro" id="IPR033656">
    <property type="entry name" value="HisRS_anticodon"/>
</dbReference>
<dbReference type="NCBIfam" id="TIGR00442">
    <property type="entry name" value="hisS"/>
    <property type="match status" value="1"/>
</dbReference>
<dbReference type="PANTHER" id="PTHR43707:SF1">
    <property type="entry name" value="HISTIDINE--TRNA LIGASE, MITOCHONDRIAL-RELATED"/>
    <property type="match status" value="1"/>
</dbReference>
<dbReference type="PANTHER" id="PTHR43707">
    <property type="entry name" value="HISTIDYL-TRNA SYNTHETASE"/>
    <property type="match status" value="1"/>
</dbReference>
<dbReference type="Pfam" id="PF03129">
    <property type="entry name" value="HGTP_anticodon"/>
    <property type="match status" value="1"/>
</dbReference>
<dbReference type="Pfam" id="PF13393">
    <property type="entry name" value="tRNA-synt_His"/>
    <property type="match status" value="1"/>
</dbReference>
<dbReference type="PIRSF" id="PIRSF001549">
    <property type="entry name" value="His-tRNA_synth"/>
    <property type="match status" value="1"/>
</dbReference>
<dbReference type="SUPFAM" id="SSF52954">
    <property type="entry name" value="Class II aaRS ABD-related"/>
    <property type="match status" value="1"/>
</dbReference>
<dbReference type="SUPFAM" id="SSF55681">
    <property type="entry name" value="Class II aaRS and biotin synthetases"/>
    <property type="match status" value="1"/>
</dbReference>
<dbReference type="PROSITE" id="PS50862">
    <property type="entry name" value="AA_TRNA_LIGASE_II"/>
    <property type="match status" value="1"/>
</dbReference>
<proteinExistence type="inferred from homology"/>
<name>SYH_STRA1</name>